<reference key="1">
    <citation type="journal article" date="2006" name="Nat. Cell Biol.">
        <title>The CENP-H-I complex is required for the efficient incorporation of newly synthesized CENP-A into centromeres.</title>
        <authorList>
            <person name="Okada M."/>
            <person name="Cheeseman I.M."/>
            <person name="Hori T."/>
            <person name="Okawa K."/>
            <person name="McLeod I.X."/>
            <person name="Yates J.R. III"/>
            <person name="Desai A."/>
            <person name="Fukagawa T."/>
        </authorList>
    </citation>
    <scope>NUCLEOTIDE SEQUENCE [MRNA]</scope>
    <scope>IDENTIFICATION BY MASS SPECTROMETRY</scope>
    <scope>IDENTIFICATION IN A COMPLEX WITH CENPH; CENPI; CENPK; CENPL; CENPM AND CENPP</scope>
</reference>
<reference key="2">
    <citation type="journal article" date="2005" name="Genome Biol.">
        <title>Full-length cDNAs from chicken bursal lymphocytes to facilitate gene function analysis.</title>
        <authorList>
            <person name="Caldwell R.B."/>
            <person name="Kierzek A.M."/>
            <person name="Arakawa H."/>
            <person name="Bezzubov Y."/>
            <person name="Zaim J."/>
            <person name="Fiedler P."/>
            <person name="Kutter S."/>
            <person name="Blagodatski A."/>
            <person name="Kostovska D."/>
            <person name="Koter M."/>
            <person name="Plachy J."/>
            <person name="Carninci P."/>
            <person name="Hayashizaki Y."/>
            <person name="Buerstedde J.-M."/>
        </authorList>
    </citation>
    <scope>NUCLEOTIDE SEQUENCE [LARGE SCALE MRNA]</scope>
    <source>
        <strain>CB</strain>
        <tissue>Bursa of Fabricius</tissue>
    </source>
</reference>
<reference key="3">
    <citation type="journal article" date="2008" name="Mol. Biol. Cell">
        <title>CENP-O class proteins form a stable complex and are required for proper kinetochore function.</title>
        <authorList>
            <person name="Hori T."/>
            <person name="Okada M."/>
            <person name="Maenaka K."/>
            <person name="Fukagawa T."/>
        </authorList>
    </citation>
    <scope>DISRUPTION PHENOTYPE</scope>
    <scope>SUBCELLULAR LOCATION</scope>
    <scope>FUNCTION</scope>
    <scope>IDENTIFICATION IN A COMPLEX WITH CENPP; CENPQ; CENPU AND CENPR</scope>
</reference>
<protein>
    <recommendedName>
        <fullName>Centromere protein O</fullName>
        <shortName>CENP-O</shortName>
    </recommendedName>
</protein>
<comment type="function">
    <text evidence="1 5">Component of the CENPA-HI complex, a centromeric complex involved in assembly of kinetochore proteins, mitotic progression and chromosome segregation (By similarity). Involved in kinetochore assembly and required for recovery from spindle damage.</text>
</comment>
<comment type="subunit">
    <text evidence="4 5">Component of the CENPA-HI complex, at least composed of CENPH, CENPI, CENPK, CENPL, CENPM, CENPO and CENPP. Component of a discrete complex composed of at least CENPO, CENPP, CENPQ, CENPR and CENPU.</text>
</comment>
<comment type="subcellular location">
    <subcellularLocation>
        <location evidence="7">Nucleus</location>
    </subcellularLocation>
    <subcellularLocation>
        <location evidence="7">Chromosome</location>
        <location evidence="7">Centromere</location>
    </subcellularLocation>
    <text evidence="6">Localizes exclusively in the centromeres.</text>
</comment>
<comment type="disruption phenotype">
    <text evidence="5">Increases time to progress through G2/M phase.</text>
</comment>
<comment type="similarity">
    <text evidence="6">Belongs to the CENP-O/MCM21 family.</text>
</comment>
<accession>Q1T7B8</accession>
<accession>Q5ZJK9</accession>
<dbReference type="EMBL" id="AB231850">
    <property type="protein sequence ID" value="BAE93415.1"/>
    <property type="molecule type" value="mRNA"/>
</dbReference>
<dbReference type="EMBL" id="AJ720425">
    <property type="protein sequence ID" value="CAG32084.1"/>
    <property type="molecule type" value="mRNA"/>
</dbReference>
<dbReference type="RefSeq" id="NP_001026270.1">
    <property type="nucleotide sequence ID" value="NM_001031099.1"/>
</dbReference>
<dbReference type="SMR" id="Q1T7B8"/>
<dbReference type="BioGRID" id="682757">
    <property type="interactions" value="2"/>
</dbReference>
<dbReference type="FunCoup" id="Q1T7B8">
    <property type="interactions" value="1176"/>
</dbReference>
<dbReference type="STRING" id="9031.ENSGALP00000026757"/>
<dbReference type="PaxDb" id="9031-ENSGALP00000026757"/>
<dbReference type="GeneID" id="422014"/>
<dbReference type="KEGG" id="gga:422014"/>
<dbReference type="CTD" id="79172"/>
<dbReference type="VEuPathDB" id="HostDB:geneid_422014"/>
<dbReference type="eggNOG" id="ENOG502RY72">
    <property type="taxonomic scope" value="Eukaryota"/>
</dbReference>
<dbReference type="InParanoid" id="Q1T7B8"/>
<dbReference type="OrthoDB" id="10050372at2759"/>
<dbReference type="PhylomeDB" id="Q1T7B8"/>
<dbReference type="PRO" id="PR:Q1T7B8"/>
<dbReference type="Proteomes" id="UP000000539">
    <property type="component" value="Unassembled WGS sequence"/>
</dbReference>
<dbReference type="GO" id="GO:0031511">
    <property type="term" value="C:Mis6-Sim4 complex"/>
    <property type="evidence" value="ECO:0000318"/>
    <property type="project" value="GO_Central"/>
</dbReference>
<dbReference type="GO" id="GO:0005634">
    <property type="term" value="C:nucleus"/>
    <property type="evidence" value="ECO:0007669"/>
    <property type="project" value="UniProtKB-SubCell"/>
</dbReference>
<dbReference type="GO" id="GO:0034508">
    <property type="term" value="P:centromere complex assembly"/>
    <property type="evidence" value="ECO:0007669"/>
    <property type="project" value="InterPro"/>
</dbReference>
<dbReference type="CDD" id="cd23836">
    <property type="entry name" value="DRWD-C_CENP-O"/>
    <property type="match status" value="1"/>
</dbReference>
<dbReference type="CDD" id="cd23835">
    <property type="entry name" value="DRWD-N_CENP-O"/>
    <property type="match status" value="1"/>
</dbReference>
<dbReference type="InterPro" id="IPR018464">
    <property type="entry name" value="CENP-O"/>
</dbReference>
<dbReference type="PANTHER" id="PTHR14582:SF1">
    <property type="entry name" value="CENTROMERE PROTEIN O"/>
    <property type="match status" value="1"/>
</dbReference>
<dbReference type="PANTHER" id="PTHR14582">
    <property type="entry name" value="INNER KINETOCHORE SUBUNIT MAL2"/>
    <property type="match status" value="1"/>
</dbReference>
<dbReference type="Pfam" id="PF09496">
    <property type="entry name" value="CENP-O"/>
    <property type="match status" value="1"/>
</dbReference>
<name>CENPO_CHICK</name>
<sequence length="325" mass="36593">MEEERNSDEKENALCGRSLTAASRDGGGRMPAAPLAQGKVERGKVYSGDGVLGYLEMLEAQAHELGLKQEEKEQQEKKLDRLKARVQELRARRDELRAKVELQEKRLLDKEGVMTDPAQPSAQTVLEWKVKSLKAMLQVFYLTGISGKLTKQGVCFCISTAYEGTYLDSYYVDLLIKPLVKIQRHSVPVFIPLEQIAKKYLQTDIRRFLSVLSDHLNAYVGRRRQADQLEEHFSDHIDGTLQRNSLCNLLVFNYTVSSNSKTFPFNVRLLYGDLCCSLPTEAIISCTPGTLPLLAEMAAAHSNAFRHMALHKAFDSLINAKESQN</sequence>
<gene>
    <name type="primary">CENPO</name>
    <name type="ORF">RCJMB04_17f21</name>
</gene>
<organism>
    <name type="scientific">Gallus gallus</name>
    <name type="common">Chicken</name>
    <dbReference type="NCBI Taxonomy" id="9031"/>
    <lineage>
        <taxon>Eukaryota</taxon>
        <taxon>Metazoa</taxon>
        <taxon>Chordata</taxon>
        <taxon>Craniata</taxon>
        <taxon>Vertebrata</taxon>
        <taxon>Euteleostomi</taxon>
        <taxon>Archelosauria</taxon>
        <taxon>Archosauria</taxon>
        <taxon>Dinosauria</taxon>
        <taxon>Saurischia</taxon>
        <taxon>Theropoda</taxon>
        <taxon>Coelurosauria</taxon>
        <taxon>Aves</taxon>
        <taxon>Neognathae</taxon>
        <taxon>Galloanserae</taxon>
        <taxon>Galliformes</taxon>
        <taxon>Phasianidae</taxon>
        <taxon>Phasianinae</taxon>
        <taxon>Gallus</taxon>
    </lineage>
</organism>
<evidence type="ECO:0000250" key="1"/>
<evidence type="ECO:0000255" key="2"/>
<evidence type="ECO:0000256" key="3">
    <source>
        <dbReference type="SAM" id="MobiDB-lite"/>
    </source>
</evidence>
<evidence type="ECO:0000269" key="4">
    <source>
    </source>
</evidence>
<evidence type="ECO:0000269" key="5">
    <source>
    </source>
</evidence>
<evidence type="ECO:0000305" key="6"/>
<evidence type="ECO:0000305" key="7">
    <source>
    </source>
</evidence>
<keyword id="KW-0137">Centromere</keyword>
<keyword id="KW-0158">Chromosome</keyword>
<keyword id="KW-0175">Coiled coil</keyword>
<keyword id="KW-0539">Nucleus</keyword>
<keyword id="KW-1185">Reference proteome</keyword>
<feature type="chain" id="PRO_0000249504" description="Centromere protein O">
    <location>
        <begin position="1"/>
        <end position="325"/>
    </location>
</feature>
<feature type="region of interest" description="Disordered" evidence="3">
    <location>
        <begin position="1"/>
        <end position="35"/>
    </location>
</feature>
<feature type="coiled-coil region" evidence="2">
    <location>
        <begin position="55"/>
        <end position="112"/>
    </location>
</feature>
<feature type="sequence conflict" description="In Ref. 1; BAE93415." evidence="6" ref="1">
    <original>R</original>
    <variation>H</variation>
    <location>
        <position position="5"/>
    </location>
</feature>
<feature type="sequence conflict" description="In Ref. 1; BAE93415." evidence="6" ref="1">
    <original>D</original>
    <variation>N</variation>
    <location>
        <position position="8"/>
    </location>
</feature>
<feature type="sequence conflict" description="In Ref. 1; BAE93415." evidence="6" ref="1">
    <original>R</original>
    <variation>Q</variation>
    <location>
        <position position="97"/>
    </location>
</feature>
<feature type="sequence conflict" description="In Ref. 1; BAE93415." evidence="6" ref="1">
    <original>T</original>
    <variation>A</variation>
    <location>
        <position position="115"/>
    </location>
</feature>
<feature type="sequence conflict" description="In Ref. 1; BAE93415." evidence="6" ref="1">
    <original>R</original>
    <variation>H</variation>
    <location>
        <position position="224"/>
    </location>
</feature>
<proteinExistence type="evidence at protein level"/>